<protein>
    <recommendedName>
        <fullName evidence="4">2-epi-valiolone synthase</fullName>
        <shortName evidence="4">EVS</shortName>
        <ecNumber evidence="3">4.2.3.155</ecNumber>
    </recommendedName>
    <alternativeName>
        <fullName evidence="4">Sedoheptulose 7-phosphate cyclase</fullName>
    </alternativeName>
</protein>
<dbReference type="EC" id="4.2.3.155" evidence="3"/>
<dbReference type="EMBL" id="AAMD01000110">
    <property type="protein sequence ID" value="EAU64596.1"/>
    <property type="molecule type" value="Genomic_DNA"/>
</dbReference>
<dbReference type="EMBL" id="CP002271">
    <property type="protein sequence ID" value="ADO70932.1"/>
    <property type="molecule type" value="Genomic_DNA"/>
</dbReference>
<dbReference type="RefSeq" id="WP_002616331.1">
    <property type="nucleotide sequence ID" value="NC_014623.1"/>
</dbReference>
<dbReference type="SMR" id="Q08VU0"/>
<dbReference type="STRING" id="378806.STAUR_3140"/>
<dbReference type="KEGG" id="sur:STAUR_3140"/>
<dbReference type="PATRIC" id="fig|378806.16.peg.3586"/>
<dbReference type="eggNOG" id="COG0337">
    <property type="taxonomic scope" value="Bacteria"/>
</dbReference>
<dbReference type="HOGENOM" id="CLU_001201_0_1_7"/>
<dbReference type="OrthoDB" id="9806583at2"/>
<dbReference type="BRENDA" id="4.2.3.155">
    <property type="organism ID" value="5908"/>
</dbReference>
<dbReference type="Proteomes" id="UP000001351">
    <property type="component" value="Chromosome"/>
</dbReference>
<dbReference type="Proteomes" id="UP000032702">
    <property type="component" value="Unassembled WGS sequence"/>
</dbReference>
<dbReference type="GO" id="GO:0003856">
    <property type="term" value="F:3-dehydroquinate synthase activity"/>
    <property type="evidence" value="ECO:0007669"/>
    <property type="project" value="TreeGrafter"/>
</dbReference>
<dbReference type="GO" id="GO:0046872">
    <property type="term" value="F:metal ion binding"/>
    <property type="evidence" value="ECO:0007669"/>
    <property type="project" value="UniProtKB-KW"/>
</dbReference>
<dbReference type="GO" id="GO:0000166">
    <property type="term" value="F:nucleotide binding"/>
    <property type="evidence" value="ECO:0007669"/>
    <property type="project" value="UniProtKB-KW"/>
</dbReference>
<dbReference type="CDD" id="cd08195">
    <property type="entry name" value="DHQS"/>
    <property type="match status" value="1"/>
</dbReference>
<dbReference type="FunFam" id="3.40.50.1970:FF:000007">
    <property type="entry name" value="Pentafunctional AROM polypeptide"/>
    <property type="match status" value="1"/>
</dbReference>
<dbReference type="Gene3D" id="3.40.50.1970">
    <property type="match status" value="1"/>
</dbReference>
<dbReference type="Gene3D" id="1.20.1090.10">
    <property type="entry name" value="Dehydroquinate synthase-like - alpha domain"/>
    <property type="match status" value="1"/>
</dbReference>
<dbReference type="InterPro" id="IPR050071">
    <property type="entry name" value="Dehydroquinate_synthase"/>
</dbReference>
<dbReference type="InterPro" id="IPR030960">
    <property type="entry name" value="DHQS/DOIS_N"/>
</dbReference>
<dbReference type="InterPro" id="IPR056179">
    <property type="entry name" value="DHQS_C"/>
</dbReference>
<dbReference type="PANTHER" id="PTHR43622">
    <property type="entry name" value="3-DEHYDROQUINATE SYNTHASE"/>
    <property type="match status" value="1"/>
</dbReference>
<dbReference type="PANTHER" id="PTHR43622:SF1">
    <property type="entry name" value="3-DEHYDROQUINATE SYNTHASE"/>
    <property type="match status" value="1"/>
</dbReference>
<dbReference type="Pfam" id="PF01761">
    <property type="entry name" value="DHQ_synthase"/>
    <property type="match status" value="1"/>
</dbReference>
<dbReference type="Pfam" id="PF24621">
    <property type="entry name" value="DHQS_C"/>
    <property type="match status" value="1"/>
</dbReference>
<dbReference type="SUPFAM" id="SSF56796">
    <property type="entry name" value="Dehydroquinate synthase-like"/>
    <property type="match status" value="1"/>
</dbReference>
<feature type="chain" id="PRO_0000441284" description="2-epi-valiolone synthase">
    <location>
        <begin position="1"/>
        <end position="406"/>
    </location>
</feature>
<feature type="region of interest" description="Disordered" evidence="2">
    <location>
        <begin position="1"/>
        <end position="21"/>
    </location>
</feature>
<feature type="binding site" evidence="1">
    <location>
        <begin position="105"/>
        <end position="108"/>
    </location>
    <ligand>
        <name>NAD(+)</name>
        <dbReference type="ChEBI" id="CHEBI:57540"/>
    </ligand>
</feature>
<feature type="binding site" evidence="1">
    <location>
        <begin position="137"/>
        <end position="141"/>
    </location>
    <ligand>
        <name>NAD(+)</name>
        <dbReference type="ChEBI" id="CHEBI:57540"/>
    </ligand>
</feature>
<feature type="binding site" evidence="1">
    <location>
        <begin position="161"/>
        <end position="162"/>
    </location>
    <ligand>
        <name>NAD(+)</name>
        <dbReference type="ChEBI" id="CHEBI:57540"/>
    </ligand>
</feature>
<feature type="binding site" evidence="1">
    <location>
        <position position="174"/>
    </location>
    <ligand>
        <name>NAD(+)</name>
        <dbReference type="ChEBI" id="CHEBI:57540"/>
    </ligand>
</feature>
<feature type="binding site" evidence="1">
    <location>
        <position position="183"/>
    </location>
    <ligand>
        <name>NAD(+)</name>
        <dbReference type="ChEBI" id="CHEBI:57540"/>
    </ligand>
</feature>
<feature type="binding site" evidence="1">
    <location>
        <begin position="201"/>
        <end position="204"/>
    </location>
    <ligand>
        <name>NAD(+)</name>
        <dbReference type="ChEBI" id="CHEBI:57540"/>
    </ligand>
</feature>
<feature type="binding site" evidence="1">
    <location>
        <position position="216"/>
    </location>
    <ligand>
        <name>Zn(2+)</name>
        <dbReference type="ChEBI" id="CHEBI:29105"/>
    </ligand>
</feature>
<feature type="binding site" evidence="1">
    <location>
        <position position="287"/>
    </location>
    <ligand>
        <name>Zn(2+)</name>
        <dbReference type="ChEBI" id="CHEBI:29105"/>
    </ligand>
</feature>
<feature type="binding site" evidence="1">
    <location>
        <position position="304"/>
    </location>
    <ligand>
        <name>Zn(2+)</name>
        <dbReference type="ChEBI" id="CHEBI:29105"/>
    </ligand>
</feature>
<comment type="function">
    <text evidence="3">Catalyzes the conversion of sedoheptulose 7-phosphate to 2-epi-valiolone, which may serve as an alternative precursor for aminocyclitol biosynthesis.</text>
</comment>
<comment type="catalytic activity">
    <reaction evidence="3">
        <text>D-sedoheptulose 7-phosphate = 2-epi-valiolone + phosphate</text>
        <dbReference type="Rhea" id="RHEA:49564"/>
        <dbReference type="ChEBI" id="CHEBI:43474"/>
        <dbReference type="ChEBI" id="CHEBI:57483"/>
        <dbReference type="ChEBI" id="CHEBI:131717"/>
        <dbReference type="EC" id="4.2.3.155"/>
    </reaction>
</comment>
<comment type="cofactor">
    <cofactor evidence="3">
        <name>NAD(+)</name>
        <dbReference type="ChEBI" id="CHEBI:57540"/>
    </cofactor>
</comment>
<comment type="cofactor">
    <cofactor evidence="3">
        <name>Co(2+)</name>
        <dbReference type="ChEBI" id="CHEBI:48828"/>
    </cofactor>
    <cofactor evidence="3">
        <name>Zn(2+)</name>
        <dbReference type="ChEBI" id="CHEBI:29105"/>
    </cofactor>
    <text evidence="3">Binds 1 divalent metal cation per subunit. Co(2+) is the preferred cofactor.</text>
</comment>
<comment type="biophysicochemical properties">
    <kinetics>
        <KM evidence="3">38.6 uM for sedoheptulose 7-phosphate</KM>
        <text evidence="3">kcat is 3.7 min(-1).</text>
    </kinetics>
</comment>
<comment type="similarity">
    <text evidence="5">Belongs to the sugar phosphate cyclases superfamily. EVS family.</text>
</comment>
<keyword id="KW-0170">Cobalt</keyword>
<keyword id="KW-0456">Lyase</keyword>
<keyword id="KW-0479">Metal-binding</keyword>
<keyword id="KW-0520">NAD</keyword>
<keyword id="KW-0547">Nucleotide-binding</keyword>
<keyword id="KW-0862">Zinc</keyword>
<accession>Q08VU0</accession>
<gene>
    <name evidence="6" type="ordered locus">STAUR_3140</name>
    <name evidence="7" type="ORF">STIAU_4466</name>
</gene>
<name>EVS_STIAD</name>
<sequence>MPSTGSTPILAHDVKSPHRGSLALDGGKTGYRVTVHREDRYEIIIGRGTLARLGELLRPVMAANEADSAVIITDNHVGPLYAELVTKRISATGAPVQCIVIPAGEPSKSIAQAHRLWDELRSRSVRRRTFLVALGGGVLCDLVGFVATTYLRGIPYVNVATSLMGQVDGAIGGKVGVDHSTGKNLIGGFYHPDLVVIDPSCLATLPLAEVINGLAEAVKVALIGTPGLFEQLERLPMSTAWPLDQAAPERLIEGLGPIIPAAIGKKLELLAPDPFEQDLRRLLNLGHSVGHGLEAATHFVRYRHGEAVAIGTATVTAISTGLGLTSVDTLRRILRLLQKLRLPVTVPDDLREVVWQHLETARLVRNGRLLLVMPTAIDHSVIIDDITRGQYDAACQLVAQEAPACG</sequence>
<evidence type="ECO:0000250" key="1">
    <source>
        <dbReference type="UniProtKB" id="Q3M6C3"/>
    </source>
</evidence>
<evidence type="ECO:0000256" key="2">
    <source>
        <dbReference type="SAM" id="MobiDB-lite"/>
    </source>
</evidence>
<evidence type="ECO:0000269" key="3">
    <source>
    </source>
</evidence>
<evidence type="ECO:0000303" key="4">
    <source>
    </source>
</evidence>
<evidence type="ECO:0000305" key="5"/>
<evidence type="ECO:0000312" key="6">
    <source>
        <dbReference type="EMBL" id="ADO70932.1"/>
    </source>
</evidence>
<evidence type="ECO:0000312" key="7">
    <source>
        <dbReference type="EMBL" id="EAU64596.1"/>
    </source>
</evidence>
<reference key="1">
    <citation type="submission" date="2006-04" db="EMBL/GenBank/DDBJ databases">
        <authorList>
            <person name="Nierman W.C."/>
        </authorList>
    </citation>
    <scope>NUCLEOTIDE SEQUENCE [LARGE SCALE GENOMIC DNA]</scope>
    <source>
        <strain>DW4/3-1</strain>
    </source>
</reference>
<reference key="2">
    <citation type="journal article" date="2011" name="Mol. Biol. Evol.">
        <title>Comparative genomic analysis of fruiting body formation in Myxococcales.</title>
        <authorList>
            <person name="Huntley S."/>
            <person name="Hamann N."/>
            <person name="Wegener-Feldbruegge S."/>
            <person name="Treuner-Lange A."/>
            <person name="Kube M."/>
            <person name="Reinhardt R."/>
            <person name="Klages S."/>
            <person name="Mueller R."/>
            <person name="Ronning C.M."/>
            <person name="Nierman W.C."/>
            <person name="Sogaard-Andersen L."/>
        </authorList>
    </citation>
    <scope>NUCLEOTIDE SEQUENCE [LARGE SCALE GENOMIC DNA]</scope>
    <source>
        <strain>DW4/3-1</strain>
    </source>
</reference>
<reference key="3">
    <citation type="journal article" date="2012" name="J. Am. Chem. Soc.">
        <title>Evolutionary divergence of sedoheptulose 7-phosphate cyclases leads to several distinct cyclic products.</title>
        <authorList>
            <person name="Asamizu S."/>
            <person name="Xie P."/>
            <person name="Brumsted C.J."/>
            <person name="Flatt P.M."/>
            <person name="Mahmud T."/>
        </authorList>
    </citation>
    <scope>FUNCTION</scope>
    <scope>CATALYTIC ACTIVITY</scope>
    <scope>COFACTOR</scope>
    <scope>BIOPHYSICOCHEMICAL PROPERTIES</scope>
    <source>
        <strain>DW4/3-1</strain>
    </source>
</reference>
<proteinExistence type="evidence at protein level"/>
<organism>
    <name type="scientific">Stigmatella aurantiaca (strain DW4/3-1)</name>
    <dbReference type="NCBI Taxonomy" id="378806"/>
    <lineage>
        <taxon>Bacteria</taxon>
        <taxon>Pseudomonadati</taxon>
        <taxon>Myxococcota</taxon>
        <taxon>Myxococcia</taxon>
        <taxon>Myxococcales</taxon>
        <taxon>Cystobacterineae</taxon>
        <taxon>Archangiaceae</taxon>
        <taxon>Stigmatella</taxon>
    </lineage>
</organism>